<proteinExistence type="inferred from homology"/>
<reference key="1">
    <citation type="submission" date="2007-07" db="EMBL/GenBank/DDBJ databases">
        <title>Complete sequence of Fervidobacterium nodosum Rt17-B1.</title>
        <authorList>
            <consortium name="US DOE Joint Genome Institute"/>
            <person name="Copeland A."/>
            <person name="Lucas S."/>
            <person name="Lapidus A."/>
            <person name="Barry K."/>
            <person name="Glavina del Rio T."/>
            <person name="Dalin E."/>
            <person name="Tice H."/>
            <person name="Pitluck S."/>
            <person name="Saunders E."/>
            <person name="Brettin T."/>
            <person name="Bruce D."/>
            <person name="Detter J.C."/>
            <person name="Han C."/>
            <person name="Schmutz J."/>
            <person name="Larimer F."/>
            <person name="Land M."/>
            <person name="Hauser L."/>
            <person name="Kyrpides N."/>
            <person name="Mikhailova N."/>
            <person name="Nelson K."/>
            <person name="Gogarten J.P."/>
            <person name="Noll K."/>
            <person name="Richardson P."/>
        </authorList>
    </citation>
    <scope>NUCLEOTIDE SEQUENCE [LARGE SCALE GENOMIC DNA]</scope>
    <source>
        <strain>ATCC 35602 / DSM 5306 / Rt17-B1</strain>
    </source>
</reference>
<sequence>MKFMTSDEIREAYLSFFEKKGHKRLPSASLIPDDPQLMFTVAGMVPFKPIFWGKVDPVYPRVTTCQKCVRTNDIENVGRTPRHHTFFEMLGNFSFGDYFKQEAIEWAWEFVTKVLEMPEEKLWVSVYEYDDEAYEIWRKLGVPERKIVRMSKEDNFWGPAGPTGPCGPCSEIFYDTGVEVPVPEGQDPTPANTDGRYIEIWNLVFTEFYQDEEGNLHPLPRKNIDTGAGLERISAMMQGVYWNFDTDLFKPIIESIENVLKVSYKSDKVKDVSIRVIADHVRSVTFMIADGVLPSNEGRGYVLRRVLRRALRHGVLLGAKEPFLYKIVDSVVQKMGKIYPEIVEKQSFVENIVKSEELKFINNLSRGLEIVQKIVTTSGKISAEDAFKLYDTYGFPIDILRDIATENGYELDEKGFEKYLEEQRERSRKAQGEVEFAQKTGYENLGIETVFVGYDTLVSESSVLKIRVNGEFVEKAEGNDLECELILDITPFYAEKGGQVADTGVIKSQDGLFTVEYVYSPVEGIIVHRGKLNGKISVNEKVQSQVDEIKRKSTMRNHTATHILHSALRKVLGSHVRQAGSLVEPTRLRFDFTHYQALTKDEITKIENIVNEVILKAIPVVTEIKSYDEAVKEGAMALFEEKYGDFVRVVKVSDFSEELCGGTHVKNTGEIGLFKIVSESAVSAGVRRIEAITGLNSLEYLRTDEELFEKLKLLLEAPKSEIVEKIQKILEEKKNLEKEIQEIKRKLINPEEIAKKVKEYNNIKYVVSVLEDVEPDILKDLIDNISDRIKGIVLLISKMSDKIIVTVKVPKELTQDYNAGNIAKLVSKVLGGGGGGSPTFAQAGGKLIEKIDEATELFEKIIRKEVQ</sequence>
<keyword id="KW-0030">Aminoacyl-tRNA synthetase</keyword>
<keyword id="KW-0067">ATP-binding</keyword>
<keyword id="KW-0963">Cytoplasm</keyword>
<keyword id="KW-0436">Ligase</keyword>
<keyword id="KW-0479">Metal-binding</keyword>
<keyword id="KW-0547">Nucleotide-binding</keyword>
<keyword id="KW-0648">Protein biosynthesis</keyword>
<keyword id="KW-1185">Reference proteome</keyword>
<keyword id="KW-0694">RNA-binding</keyword>
<keyword id="KW-0820">tRNA-binding</keyword>
<keyword id="KW-0862">Zinc</keyword>
<gene>
    <name evidence="1" type="primary">alaS</name>
    <name type="ordered locus">Fnod_1499</name>
</gene>
<name>SYA_FERNB</name>
<accession>A7HN59</accession>
<organism>
    <name type="scientific">Fervidobacterium nodosum (strain ATCC 35602 / DSM 5306 / Rt17-B1)</name>
    <dbReference type="NCBI Taxonomy" id="381764"/>
    <lineage>
        <taxon>Bacteria</taxon>
        <taxon>Thermotogati</taxon>
        <taxon>Thermotogota</taxon>
        <taxon>Thermotogae</taxon>
        <taxon>Thermotogales</taxon>
        <taxon>Fervidobacteriaceae</taxon>
        <taxon>Fervidobacterium</taxon>
    </lineage>
</organism>
<comment type="function">
    <text evidence="1">Catalyzes the attachment of alanine to tRNA(Ala) in a two-step reaction: alanine is first activated by ATP to form Ala-AMP and then transferred to the acceptor end of tRNA(Ala). Also edits incorrectly charged Ser-tRNA(Ala) and Gly-tRNA(Ala) via its editing domain.</text>
</comment>
<comment type="catalytic activity">
    <reaction evidence="1">
        <text>tRNA(Ala) + L-alanine + ATP = L-alanyl-tRNA(Ala) + AMP + diphosphate</text>
        <dbReference type="Rhea" id="RHEA:12540"/>
        <dbReference type="Rhea" id="RHEA-COMP:9657"/>
        <dbReference type="Rhea" id="RHEA-COMP:9923"/>
        <dbReference type="ChEBI" id="CHEBI:30616"/>
        <dbReference type="ChEBI" id="CHEBI:33019"/>
        <dbReference type="ChEBI" id="CHEBI:57972"/>
        <dbReference type="ChEBI" id="CHEBI:78442"/>
        <dbReference type="ChEBI" id="CHEBI:78497"/>
        <dbReference type="ChEBI" id="CHEBI:456215"/>
        <dbReference type="EC" id="6.1.1.7"/>
    </reaction>
</comment>
<comment type="cofactor">
    <cofactor evidence="1">
        <name>Zn(2+)</name>
        <dbReference type="ChEBI" id="CHEBI:29105"/>
    </cofactor>
    <text evidence="1">Binds 1 zinc ion per subunit.</text>
</comment>
<comment type="subcellular location">
    <subcellularLocation>
        <location evidence="1">Cytoplasm</location>
    </subcellularLocation>
</comment>
<comment type="domain">
    <text evidence="1">Consists of three domains; the N-terminal catalytic domain, the editing domain and the C-terminal C-Ala domain. The editing domain removes incorrectly charged amino acids, while the C-Ala domain, along with tRNA(Ala), serves as a bridge to cooperatively bring together the editing and aminoacylation centers thus stimulating deacylation of misacylated tRNAs.</text>
</comment>
<comment type="similarity">
    <text evidence="1">Belongs to the class-II aminoacyl-tRNA synthetase family.</text>
</comment>
<dbReference type="EC" id="6.1.1.7" evidence="1"/>
<dbReference type="EMBL" id="CP000771">
    <property type="protein sequence ID" value="ABS61342.1"/>
    <property type="molecule type" value="Genomic_DNA"/>
</dbReference>
<dbReference type="RefSeq" id="WP_011994647.1">
    <property type="nucleotide sequence ID" value="NC_009718.1"/>
</dbReference>
<dbReference type="SMR" id="A7HN59"/>
<dbReference type="STRING" id="381764.Fnod_1499"/>
<dbReference type="KEGG" id="fno:Fnod_1499"/>
<dbReference type="eggNOG" id="COG0013">
    <property type="taxonomic scope" value="Bacteria"/>
</dbReference>
<dbReference type="HOGENOM" id="CLU_004485_1_1_0"/>
<dbReference type="OrthoDB" id="9803884at2"/>
<dbReference type="Proteomes" id="UP000002415">
    <property type="component" value="Chromosome"/>
</dbReference>
<dbReference type="GO" id="GO:0005829">
    <property type="term" value="C:cytosol"/>
    <property type="evidence" value="ECO:0007669"/>
    <property type="project" value="TreeGrafter"/>
</dbReference>
<dbReference type="GO" id="GO:0004813">
    <property type="term" value="F:alanine-tRNA ligase activity"/>
    <property type="evidence" value="ECO:0007669"/>
    <property type="project" value="UniProtKB-UniRule"/>
</dbReference>
<dbReference type="GO" id="GO:0002161">
    <property type="term" value="F:aminoacyl-tRNA deacylase activity"/>
    <property type="evidence" value="ECO:0007669"/>
    <property type="project" value="TreeGrafter"/>
</dbReference>
<dbReference type="GO" id="GO:0005524">
    <property type="term" value="F:ATP binding"/>
    <property type="evidence" value="ECO:0007669"/>
    <property type="project" value="UniProtKB-UniRule"/>
</dbReference>
<dbReference type="GO" id="GO:0000049">
    <property type="term" value="F:tRNA binding"/>
    <property type="evidence" value="ECO:0007669"/>
    <property type="project" value="UniProtKB-KW"/>
</dbReference>
<dbReference type="GO" id="GO:0008270">
    <property type="term" value="F:zinc ion binding"/>
    <property type="evidence" value="ECO:0007669"/>
    <property type="project" value="UniProtKB-UniRule"/>
</dbReference>
<dbReference type="GO" id="GO:0006419">
    <property type="term" value="P:alanyl-tRNA aminoacylation"/>
    <property type="evidence" value="ECO:0007669"/>
    <property type="project" value="UniProtKB-UniRule"/>
</dbReference>
<dbReference type="CDD" id="cd00673">
    <property type="entry name" value="AlaRS_core"/>
    <property type="match status" value="1"/>
</dbReference>
<dbReference type="FunFam" id="3.10.310.40:FF:000001">
    <property type="entry name" value="Alanine--tRNA ligase"/>
    <property type="match status" value="1"/>
</dbReference>
<dbReference type="FunFam" id="3.30.54.20:FF:000001">
    <property type="entry name" value="Alanine--tRNA ligase"/>
    <property type="match status" value="1"/>
</dbReference>
<dbReference type="FunFam" id="3.30.930.10:FF:000004">
    <property type="entry name" value="Alanine--tRNA ligase"/>
    <property type="match status" value="1"/>
</dbReference>
<dbReference type="FunFam" id="3.30.980.10:FF:000004">
    <property type="entry name" value="Alanine--tRNA ligase, cytoplasmic"/>
    <property type="match status" value="1"/>
</dbReference>
<dbReference type="Gene3D" id="2.40.30.130">
    <property type="match status" value="1"/>
</dbReference>
<dbReference type="Gene3D" id="3.10.310.40">
    <property type="match status" value="1"/>
</dbReference>
<dbReference type="Gene3D" id="3.30.54.20">
    <property type="match status" value="1"/>
</dbReference>
<dbReference type="Gene3D" id="6.10.250.550">
    <property type="match status" value="1"/>
</dbReference>
<dbReference type="Gene3D" id="3.30.930.10">
    <property type="entry name" value="Bira Bifunctional Protein, Domain 2"/>
    <property type="match status" value="1"/>
</dbReference>
<dbReference type="Gene3D" id="3.30.980.10">
    <property type="entry name" value="Threonyl-trna Synthetase, Chain A, domain 2"/>
    <property type="match status" value="1"/>
</dbReference>
<dbReference type="HAMAP" id="MF_00036_B">
    <property type="entry name" value="Ala_tRNA_synth_B"/>
    <property type="match status" value="1"/>
</dbReference>
<dbReference type="InterPro" id="IPR045864">
    <property type="entry name" value="aa-tRNA-synth_II/BPL/LPL"/>
</dbReference>
<dbReference type="InterPro" id="IPR002318">
    <property type="entry name" value="Ala-tRNA-lgiase_IIc"/>
</dbReference>
<dbReference type="InterPro" id="IPR018162">
    <property type="entry name" value="Ala-tRNA-ligase_IIc_anticod-bd"/>
</dbReference>
<dbReference type="InterPro" id="IPR018165">
    <property type="entry name" value="Ala-tRNA-synth_IIc_core"/>
</dbReference>
<dbReference type="InterPro" id="IPR018164">
    <property type="entry name" value="Ala-tRNA-synth_IIc_N"/>
</dbReference>
<dbReference type="InterPro" id="IPR050058">
    <property type="entry name" value="Ala-tRNA_ligase"/>
</dbReference>
<dbReference type="InterPro" id="IPR023033">
    <property type="entry name" value="Ala_tRNA_ligase_euk/bac"/>
</dbReference>
<dbReference type="InterPro" id="IPR003156">
    <property type="entry name" value="DHHA1_dom"/>
</dbReference>
<dbReference type="InterPro" id="IPR018163">
    <property type="entry name" value="Thr/Ala-tRNA-synth_IIc_edit"/>
</dbReference>
<dbReference type="InterPro" id="IPR009000">
    <property type="entry name" value="Transl_B-barrel_sf"/>
</dbReference>
<dbReference type="InterPro" id="IPR012947">
    <property type="entry name" value="tRNA_SAD"/>
</dbReference>
<dbReference type="NCBIfam" id="TIGR00344">
    <property type="entry name" value="alaS"/>
    <property type="match status" value="1"/>
</dbReference>
<dbReference type="PANTHER" id="PTHR11777:SF9">
    <property type="entry name" value="ALANINE--TRNA LIGASE, CYTOPLASMIC"/>
    <property type="match status" value="1"/>
</dbReference>
<dbReference type="PANTHER" id="PTHR11777">
    <property type="entry name" value="ALANYL-TRNA SYNTHETASE"/>
    <property type="match status" value="1"/>
</dbReference>
<dbReference type="Pfam" id="PF02272">
    <property type="entry name" value="DHHA1"/>
    <property type="match status" value="1"/>
</dbReference>
<dbReference type="Pfam" id="PF01411">
    <property type="entry name" value="tRNA-synt_2c"/>
    <property type="match status" value="1"/>
</dbReference>
<dbReference type="Pfam" id="PF07973">
    <property type="entry name" value="tRNA_SAD"/>
    <property type="match status" value="1"/>
</dbReference>
<dbReference type="PRINTS" id="PR00980">
    <property type="entry name" value="TRNASYNTHALA"/>
</dbReference>
<dbReference type="SMART" id="SM00863">
    <property type="entry name" value="tRNA_SAD"/>
    <property type="match status" value="1"/>
</dbReference>
<dbReference type="SUPFAM" id="SSF55681">
    <property type="entry name" value="Class II aaRS and biotin synthetases"/>
    <property type="match status" value="1"/>
</dbReference>
<dbReference type="SUPFAM" id="SSF101353">
    <property type="entry name" value="Putative anticodon-binding domain of alanyl-tRNA synthetase (AlaRS)"/>
    <property type="match status" value="1"/>
</dbReference>
<dbReference type="SUPFAM" id="SSF55186">
    <property type="entry name" value="ThrRS/AlaRS common domain"/>
    <property type="match status" value="1"/>
</dbReference>
<dbReference type="SUPFAM" id="SSF50447">
    <property type="entry name" value="Translation proteins"/>
    <property type="match status" value="1"/>
</dbReference>
<dbReference type="PROSITE" id="PS50860">
    <property type="entry name" value="AA_TRNA_LIGASE_II_ALA"/>
    <property type="match status" value="1"/>
</dbReference>
<evidence type="ECO:0000255" key="1">
    <source>
        <dbReference type="HAMAP-Rule" id="MF_00036"/>
    </source>
</evidence>
<feature type="chain" id="PRO_0000347605" description="Alanine--tRNA ligase">
    <location>
        <begin position="1"/>
        <end position="867"/>
    </location>
</feature>
<feature type="binding site" evidence="1">
    <location>
        <position position="558"/>
    </location>
    <ligand>
        <name>Zn(2+)</name>
        <dbReference type="ChEBI" id="CHEBI:29105"/>
    </ligand>
</feature>
<feature type="binding site" evidence="1">
    <location>
        <position position="562"/>
    </location>
    <ligand>
        <name>Zn(2+)</name>
        <dbReference type="ChEBI" id="CHEBI:29105"/>
    </ligand>
</feature>
<feature type="binding site" evidence="1">
    <location>
        <position position="660"/>
    </location>
    <ligand>
        <name>Zn(2+)</name>
        <dbReference type="ChEBI" id="CHEBI:29105"/>
    </ligand>
</feature>
<feature type="binding site" evidence="1">
    <location>
        <position position="664"/>
    </location>
    <ligand>
        <name>Zn(2+)</name>
        <dbReference type="ChEBI" id="CHEBI:29105"/>
    </ligand>
</feature>
<protein>
    <recommendedName>
        <fullName evidence="1">Alanine--tRNA ligase</fullName>
        <ecNumber evidence="1">6.1.1.7</ecNumber>
    </recommendedName>
    <alternativeName>
        <fullName evidence="1">Alanyl-tRNA synthetase</fullName>
        <shortName evidence="1">AlaRS</shortName>
    </alternativeName>
</protein>